<evidence type="ECO:0000255" key="1">
    <source>
        <dbReference type="HAMAP-Rule" id="MF_01720"/>
    </source>
</evidence>
<organism>
    <name type="scientific">Psychrobacter arcticus (strain DSM 17307 / VKM B-2377 / 273-4)</name>
    <dbReference type="NCBI Taxonomy" id="259536"/>
    <lineage>
        <taxon>Bacteria</taxon>
        <taxon>Pseudomonadati</taxon>
        <taxon>Pseudomonadota</taxon>
        <taxon>Gammaproteobacteria</taxon>
        <taxon>Moraxellales</taxon>
        <taxon>Moraxellaceae</taxon>
        <taxon>Psychrobacter</taxon>
    </lineage>
</organism>
<protein>
    <recommendedName>
        <fullName evidence="1">Macrolide export ATP-binding/permease protein MacB</fullName>
        <ecNumber evidence="1">7.6.2.-</ecNumber>
    </recommendedName>
</protein>
<comment type="function">
    <text evidence="1">Part of the tripartite efflux system MacAB-TolC. MacB is a non-canonical ABC transporter that contains transmembrane domains (TMD), which form a pore in the inner membrane, and an ATP-binding domain (NBD), which is responsible for energy generation. Confers resistance against macrolides.</text>
</comment>
<comment type="subunit">
    <text evidence="1">Homodimer. Part of the tripartite efflux system MacAB-TolC, which is composed of an inner membrane transporter, MacB, a periplasmic membrane fusion protein, MacA, and an outer membrane component, TolC. The complex forms a large protein conduit and can translocate molecules across both the inner and outer membranes. Interacts with MacA.</text>
</comment>
<comment type="subcellular location">
    <subcellularLocation>
        <location evidence="1">Cell inner membrane</location>
        <topology evidence="1">Multi-pass membrane protein</topology>
    </subcellularLocation>
</comment>
<comment type="similarity">
    <text evidence="1">Belongs to the ABC transporter superfamily. Macrolide exporter (TC 3.A.1.122) family.</text>
</comment>
<proteinExistence type="inferred from homology"/>
<name>MACB_PSYA2</name>
<accession>Q4FU75</accession>
<gene>
    <name evidence="1" type="primary">macB</name>
    <name type="ordered locus">Psyc_0572</name>
</gene>
<dbReference type="EC" id="7.6.2.-" evidence="1"/>
<dbReference type="EMBL" id="CP000082">
    <property type="protein sequence ID" value="AAZ18433.1"/>
    <property type="molecule type" value="Genomic_DNA"/>
</dbReference>
<dbReference type="RefSeq" id="WP_011279862.1">
    <property type="nucleotide sequence ID" value="NC_007204.1"/>
</dbReference>
<dbReference type="SMR" id="Q4FU75"/>
<dbReference type="STRING" id="259536.Psyc_0572"/>
<dbReference type="KEGG" id="par:Psyc_0572"/>
<dbReference type="eggNOG" id="COG0577">
    <property type="taxonomic scope" value="Bacteria"/>
</dbReference>
<dbReference type="eggNOG" id="COG1136">
    <property type="taxonomic scope" value="Bacteria"/>
</dbReference>
<dbReference type="HOGENOM" id="CLU_000604_78_1_6"/>
<dbReference type="OrthoDB" id="9770036at2"/>
<dbReference type="Proteomes" id="UP000000546">
    <property type="component" value="Chromosome"/>
</dbReference>
<dbReference type="GO" id="GO:0005886">
    <property type="term" value="C:plasma membrane"/>
    <property type="evidence" value="ECO:0007669"/>
    <property type="project" value="UniProtKB-SubCell"/>
</dbReference>
<dbReference type="GO" id="GO:0005524">
    <property type="term" value="F:ATP binding"/>
    <property type="evidence" value="ECO:0007669"/>
    <property type="project" value="UniProtKB-KW"/>
</dbReference>
<dbReference type="GO" id="GO:0016887">
    <property type="term" value="F:ATP hydrolysis activity"/>
    <property type="evidence" value="ECO:0007669"/>
    <property type="project" value="InterPro"/>
</dbReference>
<dbReference type="GO" id="GO:0022857">
    <property type="term" value="F:transmembrane transporter activity"/>
    <property type="evidence" value="ECO:0007669"/>
    <property type="project" value="TreeGrafter"/>
</dbReference>
<dbReference type="GO" id="GO:0046677">
    <property type="term" value="P:response to antibiotic"/>
    <property type="evidence" value="ECO:0007669"/>
    <property type="project" value="UniProtKB-KW"/>
</dbReference>
<dbReference type="CDD" id="cd03255">
    <property type="entry name" value="ABC_MJ0796_LolCDE_FtsE"/>
    <property type="match status" value="1"/>
</dbReference>
<dbReference type="FunFam" id="3.40.50.300:FF:000032">
    <property type="entry name" value="Export ABC transporter ATP-binding protein"/>
    <property type="match status" value="1"/>
</dbReference>
<dbReference type="Gene3D" id="3.40.50.300">
    <property type="entry name" value="P-loop containing nucleotide triphosphate hydrolases"/>
    <property type="match status" value="1"/>
</dbReference>
<dbReference type="InterPro" id="IPR003593">
    <property type="entry name" value="AAA+_ATPase"/>
</dbReference>
<dbReference type="InterPro" id="IPR003838">
    <property type="entry name" value="ABC3_permease_C"/>
</dbReference>
<dbReference type="InterPro" id="IPR003439">
    <property type="entry name" value="ABC_transporter-like_ATP-bd"/>
</dbReference>
<dbReference type="InterPro" id="IPR017871">
    <property type="entry name" value="ABC_transporter-like_CS"/>
</dbReference>
<dbReference type="InterPro" id="IPR017911">
    <property type="entry name" value="MacB-like_ATP-bd"/>
</dbReference>
<dbReference type="InterPro" id="IPR025857">
    <property type="entry name" value="MacB_PCD"/>
</dbReference>
<dbReference type="InterPro" id="IPR050250">
    <property type="entry name" value="Macrolide_Exporter_MacB"/>
</dbReference>
<dbReference type="InterPro" id="IPR027417">
    <property type="entry name" value="P-loop_NTPase"/>
</dbReference>
<dbReference type="PANTHER" id="PTHR30572:SF14">
    <property type="entry name" value="MACROLIDE EXPORT ATP-BINDING_PERMEASE PROTEIN MACB"/>
    <property type="match status" value="1"/>
</dbReference>
<dbReference type="PANTHER" id="PTHR30572">
    <property type="entry name" value="MEMBRANE COMPONENT OF TRANSPORTER-RELATED"/>
    <property type="match status" value="1"/>
</dbReference>
<dbReference type="Pfam" id="PF00005">
    <property type="entry name" value="ABC_tran"/>
    <property type="match status" value="1"/>
</dbReference>
<dbReference type="Pfam" id="PF02687">
    <property type="entry name" value="FtsX"/>
    <property type="match status" value="1"/>
</dbReference>
<dbReference type="Pfam" id="PF12704">
    <property type="entry name" value="MacB_PCD"/>
    <property type="match status" value="1"/>
</dbReference>
<dbReference type="SMART" id="SM00382">
    <property type="entry name" value="AAA"/>
    <property type="match status" value="1"/>
</dbReference>
<dbReference type="SUPFAM" id="SSF52540">
    <property type="entry name" value="P-loop containing nucleoside triphosphate hydrolases"/>
    <property type="match status" value="1"/>
</dbReference>
<dbReference type="PROSITE" id="PS00211">
    <property type="entry name" value="ABC_TRANSPORTER_1"/>
    <property type="match status" value="1"/>
</dbReference>
<dbReference type="PROSITE" id="PS50893">
    <property type="entry name" value="ABC_TRANSPORTER_2"/>
    <property type="match status" value="1"/>
</dbReference>
<dbReference type="PROSITE" id="PS51267">
    <property type="entry name" value="MACB"/>
    <property type="match status" value="1"/>
</dbReference>
<reference key="1">
    <citation type="journal article" date="2010" name="Appl. Environ. Microbiol.">
        <title>The genome sequence of Psychrobacter arcticus 273-4, a psychroactive Siberian permafrost bacterium, reveals mechanisms for adaptation to low-temperature growth.</title>
        <authorList>
            <person name="Ayala-del-Rio H.L."/>
            <person name="Chain P.S."/>
            <person name="Grzymski J.J."/>
            <person name="Ponder M.A."/>
            <person name="Ivanova N."/>
            <person name="Bergholz P.W."/>
            <person name="Di Bartolo G."/>
            <person name="Hauser L."/>
            <person name="Land M."/>
            <person name="Bakermans C."/>
            <person name="Rodrigues D."/>
            <person name="Klappenbach J."/>
            <person name="Zarka D."/>
            <person name="Larimer F."/>
            <person name="Richardson P."/>
            <person name="Murray A."/>
            <person name="Thomashow M."/>
            <person name="Tiedje J.M."/>
        </authorList>
    </citation>
    <scope>NUCLEOTIDE SEQUENCE [LARGE SCALE GENOMIC DNA]</scope>
    <source>
        <strain>DSM 17307 / VKM B-2377 / 273-4</strain>
    </source>
</reference>
<feature type="chain" id="PRO_0000269967" description="Macrolide export ATP-binding/permease protein MacB">
    <location>
        <begin position="1"/>
        <end position="665"/>
    </location>
</feature>
<feature type="transmembrane region" description="Helical" evidence="1">
    <location>
        <begin position="287"/>
        <end position="307"/>
    </location>
</feature>
<feature type="transmembrane region" description="Helical" evidence="1">
    <location>
        <begin position="544"/>
        <end position="564"/>
    </location>
</feature>
<feature type="transmembrane region" description="Helical" evidence="1">
    <location>
        <begin position="588"/>
        <end position="608"/>
    </location>
</feature>
<feature type="transmembrane region" description="Helical" evidence="1">
    <location>
        <begin position="630"/>
        <end position="650"/>
    </location>
</feature>
<feature type="domain" description="ABC transporter" evidence="1">
    <location>
        <begin position="17"/>
        <end position="255"/>
    </location>
</feature>
<feature type="binding site" evidence="1">
    <location>
        <begin position="53"/>
        <end position="60"/>
    </location>
    <ligand>
        <name>ATP</name>
        <dbReference type="ChEBI" id="CHEBI:30616"/>
    </ligand>
</feature>
<keyword id="KW-0046">Antibiotic resistance</keyword>
<keyword id="KW-0067">ATP-binding</keyword>
<keyword id="KW-0997">Cell inner membrane</keyword>
<keyword id="KW-1003">Cell membrane</keyword>
<keyword id="KW-0472">Membrane</keyword>
<keyword id="KW-0547">Nucleotide-binding</keyword>
<keyword id="KW-1185">Reference proteome</keyword>
<keyword id="KW-1278">Translocase</keyword>
<keyword id="KW-0812">Transmembrane</keyword>
<keyword id="KW-1133">Transmembrane helix</keyword>
<keyword id="KW-0813">Transport</keyword>
<sequence length="665" mass="71792">MSSQDLYANAATDKPLMQVKGLIREFKAGEQTIRVLHDINLTIHQGEMVAIIGQSGSGKSTLMNILGCLDQATAGDYQVFGQSVNRLAPDELAKLRREHFGFIFQRYHLLGDISARDNVSVPAVYAGMDGQARNERAEQLLSDLGLADKVNNRPSQLSGGQQQRVSIARALMNGGDIILADEPTGALDSKSGKDVVQILKNLNAQGHTIIMVTHDPGLAAQAERVIEIKDGYIIADYKNEDYQRPVAQFSSIIDKHRKSAFGSFIDRLLESFKMSLLAMRAHKMRTLLTMLGIIIGIASVVSVVGLGKGSQEQILSNISSLGTNTITITDGYPYGDPRRQYNDDNLTPQDAQAVADQPYVLSVSPQLNSNMSVRYRNVQEAASISGVGKDYLDVSGETLAMGQGFDEQSILRRTQDIIIDSNAHKTFFPTTANPIGEVLLIGSVPGRVIGVLEPNEGGFSRSVDSPTLYMPYTTMMSRLIGSAYIESFVALIDNNISSSAAESAISNLMKSRHGTDDFRIRNSDSIRQTIESTTAAMTLLISSIAIISLIVGGIGVMNIMLVSVTERTNEIGVRMAVGARQSDIMQQFLIEAVLVCILGGLLGIGMAFAIGELINRVGGDSFKVIYSSTSIIAAFVCSTLIGVVFGFLPARNAAKLDPVEALSRD</sequence>